<keyword id="KW-0067">ATP-binding</keyword>
<keyword id="KW-0963">Cytoplasm</keyword>
<keyword id="KW-0436">Ligase</keyword>
<keyword id="KW-0547">Nucleotide-binding</keyword>
<keyword id="KW-0819">tRNA processing</keyword>
<proteinExistence type="inferred from homology"/>
<comment type="function">
    <text evidence="1">Ligates lysine onto the cytidine present at position 34 of the AUA codon-specific tRNA(Ile) that contains the anticodon CAU, in an ATP-dependent manner. Cytidine is converted to lysidine, thus changing the amino acid specificity of the tRNA from methionine to isoleucine.</text>
</comment>
<comment type="catalytic activity">
    <reaction evidence="1">
        <text>cytidine(34) in tRNA(Ile2) + L-lysine + ATP = lysidine(34) in tRNA(Ile2) + AMP + diphosphate + H(+)</text>
        <dbReference type="Rhea" id="RHEA:43744"/>
        <dbReference type="Rhea" id="RHEA-COMP:10625"/>
        <dbReference type="Rhea" id="RHEA-COMP:10670"/>
        <dbReference type="ChEBI" id="CHEBI:15378"/>
        <dbReference type="ChEBI" id="CHEBI:30616"/>
        <dbReference type="ChEBI" id="CHEBI:32551"/>
        <dbReference type="ChEBI" id="CHEBI:33019"/>
        <dbReference type="ChEBI" id="CHEBI:82748"/>
        <dbReference type="ChEBI" id="CHEBI:83665"/>
        <dbReference type="ChEBI" id="CHEBI:456215"/>
        <dbReference type="EC" id="6.3.4.19"/>
    </reaction>
</comment>
<comment type="subcellular location">
    <subcellularLocation>
        <location evidence="1">Cytoplasm</location>
    </subcellularLocation>
</comment>
<comment type="domain">
    <text>The N-terminal region contains the highly conserved SGGXDS motif, predicted to be a P-loop motif involved in ATP binding.</text>
</comment>
<comment type="similarity">
    <text evidence="1">Belongs to the tRNA(Ile)-lysidine synthase family.</text>
</comment>
<evidence type="ECO:0000255" key="1">
    <source>
        <dbReference type="HAMAP-Rule" id="MF_01161"/>
    </source>
</evidence>
<dbReference type="EC" id="6.3.4.19" evidence="1"/>
<dbReference type="EMBL" id="CP000046">
    <property type="protein sequence ID" value="AAW37665.1"/>
    <property type="molecule type" value="Genomic_DNA"/>
</dbReference>
<dbReference type="RefSeq" id="WP_001176715.1">
    <property type="nucleotide sequence ID" value="NZ_JBGOFO010000012.1"/>
</dbReference>
<dbReference type="SMR" id="Q5HIG6"/>
<dbReference type="KEGG" id="sac:SACOL0553"/>
<dbReference type="HOGENOM" id="CLU_018869_0_2_9"/>
<dbReference type="Proteomes" id="UP000000530">
    <property type="component" value="Chromosome"/>
</dbReference>
<dbReference type="GO" id="GO:0005737">
    <property type="term" value="C:cytoplasm"/>
    <property type="evidence" value="ECO:0007669"/>
    <property type="project" value="UniProtKB-SubCell"/>
</dbReference>
<dbReference type="GO" id="GO:0005524">
    <property type="term" value="F:ATP binding"/>
    <property type="evidence" value="ECO:0007669"/>
    <property type="project" value="UniProtKB-KW"/>
</dbReference>
<dbReference type="GO" id="GO:0032267">
    <property type="term" value="F:tRNA(Ile)-lysidine synthase activity"/>
    <property type="evidence" value="ECO:0007669"/>
    <property type="project" value="UniProtKB-EC"/>
</dbReference>
<dbReference type="GO" id="GO:0006400">
    <property type="term" value="P:tRNA modification"/>
    <property type="evidence" value="ECO:0007669"/>
    <property type="project" value="UniProtKB-UniRule"/>
</dbReference>
<dbReference type="CDD" id="cd01992">
    <property type="entry name" value="TilS_N"/>
    <property type="match status" value="1"/>
</dbReference>
<dbReference type="Gene3D" id="3.40.50.620">
    <property type="entry name" value="HUPs"/>
    <property type="match status" value="1"/>
</dbReference>
<dbReference type="HAMAP" id="MF_01161">
    <property type="entry name" value="tRNA_Ile_lys_synt"/>
    <property type="match status" value="1"/>
</dbReference>
<dbReference type="InterPro" id="IPR012796">
    <property type="entry name" value="Lysidine-tRNA-synth_C"/>
</dbReference>
<dbReference type="InterPro" id="IPR014729">
    <property type="entry name" value="Rossmann-like_a/b/a_fold"/>
</dbReference>
<dbReference type="InterPro" id="IPR011063">
    <property type="entry name" value="TilS/TtcA_N"/>
</dbReference>
<dbReference type="InterPro" id="IPR012094">
    <property type="entry name" value="tRNA_Ile_lys_synt"/>
</dbReference>
<dbReference type="InterPro" id="IPR012795">
    <property type="entry name" value="tRNA_Ile_lys_synt_N"/>
</dbReference>
<dbReference type="NCBIfam" id="TIGR02433">
    <property type="entry name" value="lysidine_TilS_C"/>
    <property type="match status" value="1"/>
</dbReference>
<dbReference type="NCBIfam" id="TIGR02432">
    <property type="entry name" value="lysidine_TilS_N"/>
    <property type="match status" value="1"/>
</dbReference>
<dbReference type="PANTHER" id="PTHR43033">
    <property type="entry name" value="TRNA(ILE)-LYSIDINE SYNTHASE-RELATED"/>
    <property type="match status" value="1"/>
</dbReference>
<dbReference type="PANTHER" id="PTHR43033:SF1">
    <property type="entry name" value="TRNA(ILE)-LYSIDINE SYNTHASE-RELATED"/>
    <property type="match status" value="1"/>
</dbReference>
<dbReference type="Pfam" id="PF01171">
    <property type="entry name" value="ATP_bind_3"/>
    <property type="match status" value="1"/>
</dbReference>
<dbReference type="Pfam" id="PF11734">
    <property type="entry name" value="TilS_C"/>
    <property type="match status" value="1"/>
</dbReference>
<dbReference type="SMART" id="SM00977">
    <property type="entry name" value="TilS_C"/>
    <property type="match status" value="1"/>
</dbReference>
<dbReference type="SUPFAM" id="SSF52402">
    <property type="entry name" value="Adenine nucleotide alpha hydrolases-like"/>
    <property type="match status" value="1"/>
</dbReference>
<dbReference type="SUPFAM" id="SSF56037">
    <property type="entry name" value="PheT/TilS domain"/>
    <property type="match status" value="1"/>
</dbReference>
<sequence length="431" mass="51292">MQLNSNGWHVDDHIVVAVSTGIDSMCLLYQLLNDYKDSYRKLTCLHVNHGVRSASIEEARFLEAYCERHHIDLHIKKLDLSHSLDRNNSIQNEARIKRYEWFDEMMNVLEADVLLTAHHLDDQLETIMYRIFNGKSTRNKLGFDELSKRKGYQIYRPLLAVSKKEIKQFQERYHIPYFEDESNKDNKYVRNDIRNRIIPAIDENNQLKVSHLLKLKQWHDEQYDILQYSAKQFIQEFVKFDEQSKYLEVSRQAFNNLPNSLKMVVLDCLLSKYYELFNISAKTYEEWFKQFSSKKAQFSINLTDKWIIQIAYGKLIIMAKNNGDTYFRVQTIKKPGNYIFNKYRLEIHSNLPKCLFPLTVRTRQSGDTFKLNGRDGYKKVNRLFIDCKVPQWVRDQMPIVLDKQQRIIAVGDLYQQQTIKKWIIISKNGDE</sequence>
<protein>
    <recommendedName>
        <fullName evidence="1">tRNA(Ile)-lysidine synthase</fullName>
        <ecNumber evidence="1">6.3.4.19</ecNumber>
    </recommendedName>
    <alternativeName>
        <fullName evidence="1">tRNA(Ile)-2-lysyl-cytidine synthase</fullName>
    </alternativeName>
    <alternativeName>
        <fullName evidence="1">tRNA(Ile)-lysidine synthetase</fullName>
    </alternativeName>
</protein>
<feature type="chain" id="PRO_0000181765" description="tRNA(Ile)-lysidine synthase">
    <location>
        <begin position="1"/>
        <end position="431"/>
    </location>
</feature>
<feature type="binding site" evidence="1">
    <location>
        <begin position="19"/>
        <end position="24"/>
    </location>
    <ligand>
        <name>ATP</name>
        <dbReference type="ChEBI" id="CHEBI:30616"/>
    </ligand>
</feature>
<name>TILS_STAAC</name>
<gene>
    <name evidence="1" type="primary">tilS</name>
    <name type="ordered locus">SACOL0553</name>
</gene>
<reference key="1">
    <citation type="journal article" date="2005" name="J. Bacteriol.">
        <title>Insights on evolution of virulence and resistance from the complete genome analysis of an early methicillin-resistant Staphylococcus aureus strain and a biofilm-producing methicillin-resistant Staphylococcus epidermidis strain.</title>
        <authorList>
            <person name="Gill S.R."/>
            <person name="Fouts D.E."/>
            <person name="Archer G.L."/>
            <person name="Mongodin E.F."/>
            <person name="DeBoy R.T."/>
            <person name="Ravel J."/>
            <person name="Paulsen I.T."/>
            <person name="Kolonay J.F."/>
            <person name="Brinkac L.M."/>
            <person name="Beanan M.J."/>
            <person name="Dodson R.J."/>
            <person name="Daugherty S.C."/>
            <person name="Madupu R."/>
            <person name="Angiuoli S.V."/>
            <person name="Durkin A.S."/>
            <person name="Haft D.H."/>
            <person name="Vamathevan J.J."/>
            <person name="Khouri H."/>
            <person name="Utterback T.R."/>
            <person name="Lee C."/>
            <person name="Dimitrov G."/>
            <person name="Jiang L."/>
            <person name="Qin H."/>
            <person name="Weidman J."/>
            <person name="Tran K."/>
            <person name="Kang K.H."/>
            <person name="Hance I.R."/>
            <person name="Nelson K.E."/>
            <person name="Fraser C.M."/>
        </authorList>
    </citation>
    <scope>NUCLEOTIDE SEQUENCE [LARGE SCALE GENOMIC DNA]</scope>
    <source>
        <strain>COL</strain>
    </source>
</reference>
<accession>Q5HIG6</accession>
<organism>
    <name type="scientific">Staphylococcus aureus (strain COL)</name>
    <dbReference type="NCBI Taxonomy" id="93062"/>
    <lineage>
        <taxon>Bacteria</taxon>
        <taxon>Bacillati</taxon>
        <taxon>Bacillota</taxon>
        <taxon>Bacilli</taxon>
        <taxon>Bacillales</taxon>
        <taxon>Staphylococcaceae</taxon>
        <taxon>Staphylococcus</taxon>
    </lineage>
</organism>